<reference key="1">
    <citation type="journal article" date="2002" name="Nature">
        <title>The genome sequence of Schizosaccharomyces pombe.</title>
        <authorList>
            <person name="Wood V."/>
            <person name="Gwilliam R."/>
            <person name="Rajandream M.A."/>
            <person name="Lyne M.H."/>
            <person name="Lyne R."/>
            <person name="Stewart A."/>
            <person name="Sgouros J.G."/>
            <person name="Peat N."/>
            <person name="Hayles J."/>
            <person name="Baker S.G."/>
            <person name="Basham D."/>
            <person name="Bowman S."/>
            <person name="Brooks K."/>
            <person name="Brown D."/>
            <person name="Brown S."/>
            <person name="Chillingworth T."/>
            <person name="Churcher C.M."/>
            <person name="Collins M."/>
            <person name="Connor R."/>
            <person name="Cronin A."/>
            <person name="Davis P."/>
            <person name="Feltwell T."/>
            <person name="Fraser A."/>
            <person name="Gentles S."/>
            <person name="Goble A."/>
            <person name="Hamlin N."/>
            <person name="Harris D.E."/>
            <person name="Hidalgo J."/>
            <person name="Hodgson G."/>
            <person name="Holroyd S."/>
            <person name="Hornsby T."/>
            <person name="Howarth S."/>
            <person name="Huckle E.J."/>
            <person name="Hunt S."/>
            <person name="Jagels K."/>
            <person name="James K.D."/>
            <person name="Jones L."/>
            <person name="Jones M."/>
            <person name="Leather S."/>
            <person name="McDonald S."/>
            <person name="McLean J."/>
            <person name="Mooney P."/>
            <person name="Moule S."/>
            <person name="Mungall K.L."/>
            <person name="Murphy L.D."/>
            <person name="Niblett D."/>
            <person name="Odell C."/>
            <person name="Oliver K."/>
            <person name="O'Neil S."/>
            <person name="Pearson D."/>
            <person name="Quail M.A."/>
            <person name="Rabbinowitsch E."/>
            <person name="Rutherford K.M."/>
            <person name="Rutter S."/>
            <person name="Saunders D."/>
            <person name="Seeger K."/>
            <person name="Sharp S."/>
            <person name="Skelton J."/>
            <person name="Simmonds M.N."/>
            <person name="Squares R."/>
            <person name="Squares S."/>
            <person name="Stevens K."/>
            <person name="Taylor K."/>
            <person name="Taylor R.G."/>
            <person name="Tivey A."/>
            <person name="Walsh S.V."/>
            <person name="Warren T."/>
            <person name="Whitehead S."/>
            <person name="Woodward J.R."/>
            <person name="Volckaert G."/>
            <person name="Aert R."/>
            <person name="Robben J."/>
            <person name="Grymonprez B."/>
            <person name="Weltjens I."/>
            <person name="Vanstreels E."/>
            <person name="Rieger M."/>
            <person name="Schaefer M."/>
            <person name="Mueller-Auer S."/>
            <person name="Gabel C."/>
            <person name="Fuchs M."/>
            <person name="Duesterhoeft A."/>
            <person name="Fritzc C."/>
            <person name="Holzer E."/>
            <person name="Moestl D."/>
            <person name="Hilbert H."/>
            <person name="Borzym K."/>
            <person name="Langer I."/>
            <person name="Beck A."/>
            <person name="Lehrach H."/>
            <person name="Reinhardt R."/>
            <person name="Pohl T.M."/>
            <person name="Eger P."/>
            <person name="Zimmermann W."/>
            <person name="Wedler H."/>
            <person name="Wambutt R."/>
            <person name="Purnelle B."/>
            <person name="Goffeau A."/>
            <person name="Cadieu E."/>
            <person name="Dreano S."/>
            <person name="Gloux S."/>
            <person name="Lelaure V."/>
            <person name="Mottier S."/>
            <person name="Galibert F."/>
            <person name="Aves S.J."/>
            <person name="Xiang Z."/>
            <person name="Hunt C."/>
            <person name="Moore K."/>
            <person name="Hurst S.M."/>
            <person name="Lucas M."/>
            <person name="Rochet M."/>
            <person name="Gaillardin C."/>
            <person name="Tallada V.A."/>
            <person name="Garzon A."/>
            <person name="Thode G."/>
            <person name="Daga R.R."/>
            <person name="Cruzado L."/>
            <person name="Jimenez J."/>
            <person name="Sanchez M."/>
            <person name="del Rey F."/>
            <person name="Benito J."/>
            <person name="Dominguez A."/>
            <person name="Revuelta J.L."/>
            <person name="Moreno S."/>
            <person name="Armstrong J."/>
            <person name="Forsburg S.L."/>
            <person name="Cerutti L."/>
            <person name="Lowe T."/>
            <person name="McCombie W.R."/>
            <person name="Paulsen I."/>
            <person name="Potashkin J."/>
            <person name="Shpakovski G.V."/>
            <person name="Ussery D."/>
            <person name="Barrell B.G."/>
            <person name="Nurse P."/>
        </authorList>
    </citation>
    <scope>NUCLEOTIDE SEQUENCE [LARGE SCALE GENOMIC DNA]</scope>
    <source>
        <strain>972 / ATCC 24843</strain>
    </source>
</reference>
<reference key="2">
    <citation type="journal article" date="2016" name="RNA">
        <title>Evolving specificity of tRNA 3-methyl-cytidine-32 (m3C32) modification: a subset of tRNAsSer requires N6-isopentenylation of A37.</title>
        <authorList>
            <person name="Arimbasseri A.G."/>
            <person name="Iben J."/>
            <person name="Wei F.Y."/>
            <person name="Rijal K."/>
            <person name="Tomizawa K."/>
            <person name="Hafner M."/>
            <person name="Maraia R.J."/>
        </authorList>
    </citation>
    <scope>FUNCTION</scope>
    <scope>CATALYTIC ACTIVITY</scope>
    <scope>DISRUPTION PHENOTYPE</scope>
</reference>
<sequence>MDTTPDNSEKKKTSSVREATFSINESFGGRLLTEEEDVFEQNAWDHVEWDDEHLALAKKCIEEQKLYPVTEKDAYMTHPERYWDQFYGKNEGKFFMNRRWIAQEFPELLDLLKEDAGEKSILEIGCGAGNTIWPILKENKNSNLKIFAVDYSEKAIDVVKQNPLYDAKFCSASVWDLAGSDLLRSIEEASIDAITLIFCFSALSPDQWQQAIENLYRLLKPGGLILFRDYGRLDLTQLRAKKNRILSENFYIRGDGTRVYYMTNEELVDVFGKNFKIIQNGVDKRLIVNRKKRVKMYRCWLQAKFQK</sequence>
<proteinExistence type="evidence at protein level"/>
<comment type="function">
    <text evidence="2">S-adenosyl-L-methionine-dependent methyltransferase that mediates N(3)-methylcytidine modification of residue 32 of the tRNA anticodon loop of tRNA(Thr) (PubMed:27354703). Does not catalyze N(3)-methylcytidine modification of tRNA(Ser) (PubMed:27354703).</text>
</comment>
<comment type="catalytic activity">
    <reaction evidence="5">
        <text>cytidine(32) in tRNA(Thr) + S-adenosyl-L-methionine = N(3)-methylcytidine(32) in tRNA(Thr) + S-adenosyl-L-homocysteine + H(+)</text>
        <dbReference type="Rhea" id="RHEA:50960"/>
        <dbReference type="Rhea" id="RHEA-COMP:12850"/>
        <dbReference type="Rhea" id="RHEA-COMP:12852"/>
        <dbReference type="ChEBI" id="CHEBI:15378"/>
        <dbReference type="ChEBI" id="CHEBI:57856"/>
        <dbReference type="ChEBI" id="CHEBI:59789"/>
        <dbReference type="ChEBI" id="CHEBI:74894"/>
        <dbReference type="ChEBI" id="CHEBI:82748"/>
    </reaction>
    <physiologicalReaction direction="left-to-right" evidence="5">
        <dbReference type="Rhea" id="RHEA:50961"/>
    </physiologicalReaction>
</comment>
<comment type="disruption phenotype">
    <text evidence="2">Cells lacking trm140 show abolished N(3)-methylcytidine modification in tRNA(Thr) (PubMed:27354703). Cells lacking trm140 and trm141 show abolished N(3)-methylcytidine modification in tRNAs (tRNA(Ser) and tRNA(Thr)) (PubMed:27354703).</text>
</comment>
<comment type="similarity">
    <text evidence="4">Belongs to the methyltransferase superfamily. METL family.</text>
</comment>
<feature type="chain" id="PRO_0000204457" description="tRNA N(3)-methylcytidine methyltransferase trm140">
    <location>
        <begin position="1"/>
        <end position="307"/>
    </location>
</feature>
<feature type="binding site" evidence="1">
    <location>
        <position position="83"/>
    </location>
    <ligand>
        <name>S-adenosyl-L-methionine</name>
        <dbReference type="ChEBI" id="CHEBI:59789"/>
    </ligand>
</feature>
<feature type="binding site" evidence="1">
    <location>
        <position position="87"/>
    </location>
    <ligand>
        <name>S-adenosyl-L-methionine</name>
        <dbReference type="ChEBI" id="CHEBI:59789"/>
    </ligand>
</feature>
<feature type="binding site" evidence="1">
    <location>
        <position position="125"/>
    </location>
    <ligand>
        <name>S-adenosyl-L-methionine</name>
        <dbReference type="ChEBI" id="CHEBI:59789"/>
    </ligand>
</feature>
<feature type="binding site" evidence="1">
    <location>
        <position position="150"/>
    </location>
    <ligand>
        <name>S-adenosyl-L-methionine</name>
        <dbReference type="ChEBI" id="CHEBI:59789"/>
    </ligand>
</feature>
<feature type="binding site" evidence="1">
    <location>
        <position position="176"/>
    </location>
    <ligand>
        <name>S-adenosyl-L-methionine</name>
        <dbReference type="ChEBI" id="CHEBI:59789"/>
    </ligand>
</feature>
<feature type="binding site" evidence="1">
    <location>
        <position position="177"/>
    </location>
    <ligand>
        <name>S-adenosyl-L-methionine</name>
        <dbReference type="ChEBI" id="CHEBI:59789"/>
    </ligand>
</feature>
<feature type="binding site" evidence="1">
    <location>
        <position position="197"/>
    </location>
    <ligand>
        <name>S-adenosyl-L-methionine</name>
        <dbReference type="ChEBI" id="CHEBI:59789"/>
    </ligand>
</feature>
<accession>Q9P7L6</accession>
<organism>
    <name type="scientific">Schizosaccharomyces pombe (strain 972 / ATCC 24843)</name>
    <name type="common">Fission yeast</name>
    <dbReference type="NCBI Taxonomy" id="284812"/>
    <lineage>
        <taxon>Eukaryota</taxon>
        <taxon>Fungi</taxon>
        <taxon>Dikarya</taxon>
        <taxon>Ascomycota</taxon>
        <taxon>Taphrinomycotina</taxon>
        <taxon>Schizosaccharomycetes</taxon>
        <taxon>Schizosaccharomycetales</taxon>
        <taxon>Schizosaccharomycetaceae</taxon>
        <taxon>Schizosaccharomyces</taxon>
    </lineage>
</organism>
<name>TR140_SCHPO</name>
<gene>
    <name evidence="3 6" type="primary">trm140</name>
    <name evidence="6" type="ORF">SPBC21C3.07c</name>
</gene>
<protein>
    <recommendedName>
        <fullName evidence="4">tRNA N(3)-methylcytidine methyltransferase trm140</fullName>
        <ecNumber evidence="5">2.1.1.-</ecNumber>
    </recommendedName>
</protein>
<dbReference type="EC" id="2.1.1.-" evidence="5"/>
<dbReference type="EMBL" id="CU329671">
    <property type="protein sequence ID" value="CAB76043.2"/>
    <property type="molecule type" value="Genomic_DNA"/>
</dbReference>
<dbReference type="PIR" id="T50351">
    <property type="entry name" value="T50351"/>
</dbReference>
<dbReference type="RefSeq" id="NP_596587.2">
    <property type="nucleotide sequence ID" value="NM_001022507.3"/>
</dbReference>
<dbReference type="SMR" id="Q9P7L6"/>
<dbReference type="BioGRID" id="276851">
    <property type="interactions" value="2"/>
</dbReference>
<dbReference type="FunCoup" id="Q9P7L6">
    <property type="interactions" value="658"/>
</dbReference>
<dbReference type="STRING" id="284812.Q9P7L6"/>
<dbReference type="PaxDb" id="4896-SPBC21C3.07c.1"/>
<dbReference type="EnsemblFungi" id="SPBC21C3.07c.1">
    <property type="protein sequence ID" value="SPBC21C3.07c.1:pep"/>
    <property type="gene ID" value="SPBC21C3.07c"/>
</dbReference>
<dbReference type="GeneID" id="2540321"/>
<dbReference type="KEGG" id="spo:2540321"/>
<dbReference type="PomBase" id="SPBC21C3.07c">
    <property type="gene designation" value="trm140"/>
</dbReference>
<dbReference type="VEuPathDB" id="FungiDB:SPBC21C3.07c"/>
<dbReference type="eggNOG" id="KOG2361">
    <property type="taxonomic scope" value="Eukaryota"/>
</dbReference>
<dbReference type="HOGENOM" id="CLU_029724_1_1_1"/>
<dbReference type="InParanoid" id="Q9P7L6"/>
<dbReference type="OMA" id="PAKYWDI"/>
<dbReference type="PhylomeDB" id="Q9P7L6"/>
<dbReference type="PRO" id="PR:Q9P7L6"/>
<dbReference type="Proteomes" id="UP000002485">
    <property type="component" value="Chromosome II"/>
</dbReference>
<dbReference type="GO" id="GO:0052735">
    <property type="term" value="F:tRNA (cytidine-3-)-methyltransferase activity"/>
    <property type="evidence" value="ECO:0000315"/>
    <property type="project" value="UniProtKB"/>
</dbReference>
<dbReference type="GO" id="GO:0106217">
    <property type="term" value="P:tRNA C3-cytosine methylation"/>
    <property type="evidence" value="ECO:0000315"/>
    <property type="project" value="UniProtKB"/>
</dbReference>
<dbReference type="CDD" id="cd02440">
    <property type="entry name" value="AdoMet_MTases"/>
    <property type="match status" value="1"/>
</dbReference>
<dbReference type="FunFam" id="3.40.50.150:FF:000298">
    <property type="entry name" value="Methyltransferase-like protein"/>
    <property type="match status" value="1"/>
</dbReference>
<dbReference type="Gene3D" id="3.40.50.150">
    <property type="entry name" value="Vaccinia Virus protein VP39"/>
    <property type="match status" value="1"/>
</dbReference>
<dbReference type="InterPro" id="IPR013217">
    <property type="entry name" value="Methyltransf_12"/>
</dbReference>
<dbReference type="InterPro" id="IPR026113">
    <property type="entry name" value="METTL2/6/8-like"/>
</dbReference>
<dbReference type="InterPro" id="IPR029063">
    <property type="entry name" value="SAM-dependent_MTases_sf"/>
</dbReference>
<dbReference type="PANTHER" id="PTHR22809">
    <property type="entry name" value="METHYLTRANSFERASE-RELATED"/>
    <property type="match status" value="1"/>
</dbReference>
<dbReference type="PANTHER" id="PTHR22809:SF11">
    <property type="entry name" value="TRNA N(3)-METHYLCYTIDINE METHYLTRANSFERASE METTL2"/>
    <property type="match status" value="1"/>
</dbReference>
<dbReference type="Pfam" id="PF08242">
    <property type="entry name" value="Methyltransf_12"/>
    <property type="match status" value="1"/>
</dbReference>
<dbReference type="PIRSF" id="PIRSF037755">
    <property type="entry name" value="Mettl2_prd"/>
    <property type="match status" value="1"/>
</dbReference>
<dbReference type="SUPFAM" id="SSF53335">
    <property type="entry name" value="S-adenosyl-L-methionine-dependent methyltransferases"/>
    <property type="match status" value="1"/>
</dbReference>
<keyword id="KW-0489">Methyltransferase</keyword>
<keyword id="KW-1185">Reference proteome</keyword>
<keyword id="KW-0949">S-adenosyl-L-methionine</keyword>
<keyword id="KW-0808">Transferase</keyword>
<keyword id="KW-0819">tRNA processing</keyword>
<evidence type="ECO:0000250" key="1">
    <source>
        <dbReference type="UniProtKB" id="Q8TCB7"/>
    </source>
</evidence>
<evidence type="ECO:0000269" key="2">
    <source>
    </source>
</evidence>
<evidence type="ECO:0000303" key="3">
    <source>
    </source>
</evidence>
<evidence type="ECO:0000305" key="4"/>
<evidence type="ECO:0000305" key="5">
    <source>
    </source>
</evidence>
<evidence type="ECO:0000312" key="6">
    <source>
        <dbReference type="PomBase" id="SPBC21C3.07c"/>
    </source>
</evidence>